<sequence length="100" mass="10986">MHLTLEFGGGLELLLEKSTKVHKVDLQPNDGDGKVVMKGLLAWVKSNLIKERPEMFLKGDSVRPGVLVLINDCDWELCGGLDAELEEKDVVVFISTLHGG</sequence>
<dbReference type="EMBL" id="AB072933">
    <property type="protein sequence ID" value="BAB88939.1"/>
    <property type="molecule type" value="Genomic_DNA"/>
</dbReference>
<dbReference type="EMBL" id="AP005448">
    <property type="protein sequence ID" value="BAC84286.1"/>
    <property type="status" value="ALT_SEQ"/>
    <property type="molecule type" value="Genomic_DNA"/>
</dbReference>
<dbReference type="EMBL" id="AP008213">
    <property type="protein sequence ID" value="BAF21502.1"/>
    <property type="molecule type" value="Genomic_DNA"/>
</dbReference>
<dbReference type="EMBL" id="AP014963">
    <property type="status" value="NOT_ANNOTATED_CDS"/>
    <property type="molecule type" value="Genomic_DNA"/>
</dbReference>
<dbReference type="EMBL" id="CM000144">
    <property type="protein sequence ID" value="EAZ39733.1"/>
    <property type="molecule type" value="Genomic_DNA"/>
</dbReference>
<dbReference type="RefSeq" id="XP_015645398.1">
    <property type="nucleotide sequence ID" value="XM_015789912.1"/>
</dbReference>
<dbReference type="SMR" id="Q0D6M1"/>
<dbReference type="FunCoup" id="Q0D6M1">
    <property type="interactions" value="2330"/>
</dbReference>
<dbReference type="STRING" id="39947.Q0D6M1"/>
<dbReference type="PaxDb" id="39947-Q0D6M1"/>
<dbReference type="EnsemblPlants" id="Os07t0466300-02">
    <property type="protein sequence ID" value="Os07t0466300-02"/>
    <property type="gene ID" value="Os07g0466300"/>
</dbReference>
<dbReference type="Gramene" id="Os07t0466300-02">
    <property type="protein sequence ID" value="Os07t0466300-02"/>
    <property type="gene ID" value="Os07g0466300"/>
</dbReference>
<dbReference type="KEGG" id="dosa:Os07g0466300"/>
<dbReference type="InParanoid" id="Q0D6M1"/>
<dbReference type="OrthoDB" id="10248987at2759"/>
<dbReference type="UniPathway" id="UPA00988"/>
<dbReference type="Proteomes" id="UP000000763">
    <property type="component" value="Chromosome 7"/>
</dbReference>
<dbReference type="Proteomes" id="UP000007752">
    <property type="component" value="Chromosome 7"/>
</dbReference>
<dbReference type="Proteomes" id="UP000059680">
    <property type="component" value="Chromosome 7"/>
</dbReference>
<dbReference type="GO" id="GO:0005829">
    <property type="term" value="C:cytosol"/>
    <property type="evidence" value="ECO:0007669"/>
    <property type="project" value="UniProtKB-UniRule"/>
</dbReference>
<dbReference type="GO" id="GO:0005634">
    <property type="term" value="C:nucleus"/>
    <property type="evidence" value="ECO:0000318"/>
    <property type="project" value="GO_Central"/>
</dbReference>
<dbReference type="GO" id="GO:0031386">
    <property type="term" value="F:protein tag activity"/>
    <property type="evidence" value="ECO:0000318"/>
    <property type="project" value="GO_Central"/>
</dbReference>
<dbReference type="GO" id="GO:0032447">
    <property type="term" value="P:protein urmylation"/>
    <property type="evidence" value="ECO:0000318"/>
    <property type="project" value="GO_Central"/>
</dbReference>
<dbReference type="GO" id="GO:0034227">
    <property type="term" value="P:tRNA thio-modification"/>
    <property type="evidence" value="ECO:0007669"/>
    <property type="project" value="UniProtKB-UniRule"/>
</dbReference>
<dbReference type="GO" id="GO:0002098">
    <property type="term" value="P:tRNA wobble uridine modification"/>
    <property type="evidence" value="ECO:0007669"/>
    <property type="project" value="UniProtKB-UniRule"/>
</dbReference>
<dbReference type="CDD" id="cd01764">
    <property type="entry name" value="Ubl_Urm1"/>
    <property type="match status" value="1"/>
</dbReference>
<dbReference type="Gene3D" id="3.10.20.30">
    <property type="match status" value="1"/>
</dbReference>
<dbReference type="HAMAP" id="MF_03048">
    <property type="entry name" value="Urm1"/>
    <property type="match status" value="1"/>
</dbReference>
<dbReference type="InterPro" id="IPR012675">
    <property type="entry name" value="Beta-grasp_dom_sf"/>
</dbReference>
<dbReference type="InterPro" id="IPR016155">
    <property type="entry name" value="Mopterin_synth/thiamin_S_b"/>
</dbReference>
<dbReference type="InterPro" id="IPR015221">
    <property type="entry name" value="Urm1"/>
</dbReference>
<dbReference type="PANTHER" id="PTHR14986">
    <property type="entry name" value="RURM1 PROTEIN"/>
    <property type="match status" value="1"/>
</dbReference>
<dbReference type="Pfam" id="PF09138">
    <property type="entry name" value="Urm1"/>
    <property type="match status" value="1"/>
</dbReference>
<dbReference type="PIRSF" id="PIRSF037379">
    <property type="entry name" value="Ubiquitin-related_modifier_1"/>
    <property type="match status" value="1"/>
</dbReference>
<dbReference type="SUPFAM" id="SSF54285">
    <property type="entry name" value="MoaD/ThiS"/>
    <property type="match status" value="1"/>
</dbReference>
<evidence type="ECO:0000255" key="1">
    <source>
        <dbReference type="HAMAP-Rule" id="MF_03048"/>
    </source>
</evidence>
<evidence type="ECO:0000305" key="2"/>
<gene>
    <name evidence="1" type="primary">URM1</name>
    <name type="ordered locus">Os07g0466300</name>
    <name type="ordered locus">LOC_Os07g28280</name>
    <name type="ORF">OsJ_023216</name>
    <name type="ORF">P0404G11.126-1</name>
</gene>
<comment type="function">
    <text evidence="1">Acts as a sulfur carrier required for 2-thiolation of mcm(5)S(2)U at tRNA wobble positions of cytosolic tRNA(Lys), tRNA(Glu) and tRNA(Gln). Serves as sulfur donor in tRNA 2-thiolation reaction by being thiocarboxylated (-COSH) at its C-terminus by MOCS3. The sulfur is then transferred to tRNA to form 2-thiolation of mcm(5)S(2)U. Also acts as a ubiquitin-like protein (UBL) that is covalently conjugated via an isopeptide bond to lysine residues of target proteins. The thiocarboxylated form serves as substrate for conjugation and oxidative stress specifically induces the formation of UBL-protein conjugates.</text>
</comment>
<comment type="pathway">
    <text evidence="1">tRNA modification; 5-methoxycarbonylmethyl-2-thiouridine-tRNA biosynthesis.</text>
</comment>
<comment type="subcellular location">
    <subcellularLocation>
        <location evidence="1">Cytoplasm</location>
    </subcellularLocation>
</comment>
<comment type="PTM">
    <text evidence="1">C-terminal thiocarboxylation occurs in 2 steps, it is first acyl-adenylated (-COAMP) via the hesA/moeB/thiF part of the MOCS3 homolog, then thiocarboxylated (-COSH) via the rhodanese domain of the MOCS3 homolog.</text>
</comment>
<comment type="similarity">
    <text evidence="1">Belongs to the URM1 family.</text>
</comment>
<comment type="sequence caution" evidence="2">
    <conflict type="erroneous gene model prediction">
        <sequence resource="EMBL-CDS" id="BAC84286"/>
    </conflict>
</comment>
<keyword id="KW-0963">Cytoplasm</keyword>
<keyword id="KW-1017">Isopeptide bond</keyword>
<keyword id="KW-1185">Reference proteome</keyword>
<keyword id="KW-0819">tRNA processing</keyword>
<keyword id="KW-0833">Ubl conjugation pathway</keyword>
<accession>Q0D6M1</accession>
<accession>Q7EYM5</accession>
<accession>Q8S938</accession>
<feature type="chain" id="PRO_0000367870" description="Ubiquitin-related modifier 1 homolog">
    <location>
        <begin position="1"/>
        <end position="100"/>
    </location>
</feature>
<feature type="modified residue" description="1-thioglycine" evidence="1">
    <location>
        <position position="100"/>
    </location>
</feature>
<feature type="cross-link" description="Glycyl lysine isopeptide (Gly-Lys) (interchain with K-? in acceptor proteins)" evidence="1">
    <location>
        <position position="100"/>
    </location>
</feature>
<reference key="1">
    <citation type="journal article" date="2003" name="Nature">
        <title>Mobilization of a transposon in the rice genome.</title>
        <authorList>
            <person name="Nakazaki T."/>
            <person name="Okumoto Y."/>
            <person name="Horibata A."/>
            <person name="Yamahira S."/>
            <person name="Teraishi M."/>
            <person name="Nishida H."/>
            <person name="Inoue H."/>
            <person name="Tanisaka T."/>
        </authorList>
    </citation>
    <scope>NUCLEOTIDE SEQUENCE [GENOMIC DNA]</scope>
    <source>
        <strain>cv. Gimbozu</strain>
    </source>
</reference>
<reference key="2">
    <citation type="journal article" date="2005" name="Nature">
        <title>The map-based sequence of the rice genome.</title>
        <authorList>
            <consortium name="International rice genome sequencing project (IRGSP)"/>
        </authorList>
    </citation>
    <scope>NUCLEOTIDE SEQUENCE [LARGE SCALE GENOMIC DNA]</scope>
    <source>
        <strain>cv. Nipponbare</strain>
    </source>
</reference>
<reference key="3">
    <citation type="journal article" date="2008" name="Nucleic Acids Res.">
        <title>The rice annotation project database (RAP-DB): 2008 update.</title>
        <authorList>
            <consortium name="The rice annotation project (RAP)"/>
        </authorList>
    </citation>
    <scope>GENOME REANNOTATION</scope>
    <source>
        <strain>cv. Nipponbare</strain>
    </source>
</reference>
<reference key="4">
    <citation type="journal article" date="2013" name="Rice">
        <title>Improvement of the Oryza sativa Nipponbare reference genome using next generation sequence and optical map data.</title>
        <authorList>
            <person name="Kawahara Y."/>
            <person name="de la Bastide M."/>
            <person name="Hamilton J.P."/>
            <person name="Kanamori H."/>
            <person name="McCombie W.R."/>
            <person name="Ouyang S."/>
            <person name="Schwartz D.C."/>
            <person name="Tanaka T."/>
            <person name="Wu J."/>
            <person name="Zhou S."/>
            <person name="Childs K.L."/>
            <person name="Davidson R.M."/>
            <person name="Lin H."/>
            <person name="Quesada-Ocampo L."/>
            <person name="Vaillancourt B."/>
            <person name="Sakai H."/>
            <person name="Lee S.S."/>
            <person name="Kim J."/>
            <person name="Numa H."/>
            <person name="Itoh T."/>
            <person name="Buell C.R."/>
            <person name="Matsumoto T."/>
        </authorList>
    </citation>
    <scope>GENOME REANNOTATION</scope>
    <source>
        <strain>cv. Nipponbare</strain>
    </source>
</reference>
<reference key="5">
    <citation type="journal article" date="2005" name="PLoS Biol.">
        <title>The genomes of Oryza sativa: a history of duplications.</title>
        <authorList>
            <person name="Yu J."/>
            <person name="Wang J."/>
            <person name="Lin W."/>
            <person name="Li S."/>
            <person name="Li H."/>
            <person name="Zhou J."/>
            <person name="Ni P."/>
            <person name="Dong W."/>
            <person name="Hu S."/>
            <person name="Zeng C."/>
            <person name="Zhang J."/>
            <person name="Zhang Y."/>
            <person name="Li R."/>
            <person name="Xu Z."/>
            <person name="Li S."/>
            <person name="Li X."/>
            <person name="Zheng H."/>
            <person name="Cong L."/>
            <person name="Lin L."/>
            <person name="Yin J."/>
            <person name="Geng J."/>
            <person name="Li G."/>
            <person name="Shi J."/>
            <person name="Liu J."/>
            <person name="Lv H."/>
            <person name="Li J."/>
            <person name="Wang J."/>
            <person name="Deng Y."/>
            <person name="Ran L."/>
            <person name="Shi X."/>
            <person name="Wang X."/>
            <person name="Wu Q."/>
            <person name="Li C."/>
            <person name="Ren X."/>
            <person name="Wang J."/>
            <person name="Wang X."/>
            <person name="Li D."/>
            <person name="Liu D."/>
            <person name="Zhang X."/>
            <person name="Ji Z."/>
            <person name="Zhao W."/>
            <person name="Sun Y."/>
            <person name="Zhang Z."/>
            <person name="Bao J."/>
            <person name="Han Y."/>
            <person name="Dong L."/>
            <person name="Ji J."/>
            <person name="Chen P."/>
            <person name="Wu S."/>
            <person name="Liu J."/>
            <person name="Xiao Y."/>
            <person name="Bu D."/>
            <person name="Tan J."/>
            <person name="Yang L."/>
            <person name="Ye C."/>
            <person name="Zhang J."/>
            <person name="Xu J."/>
            <person name="Zhou Y."/>
            <person name="Yu Y."/>
            <person name="Zhang B."/>
            <person name="Zhuang S."/>
            <person name="Wei H."/>
            <person name="Liu B."/>
            <person name="Lei M."/>
            <person name="Yu H."/>
            <person name="Li Y."/>
            <person name="Xu H."/>
            <person name="Wei S."/>
            <person name="He X."/>
            <person name="Fang L."/>
            <person name="Zhang Z."/>
            <person name="Zhang Y."/>
            <person name="Huang X."/>
            <person name="Su Z."/>
            <person name="Tong W."/>
            <person name="Li J."/>
            <person name="Tong Z."/>
            <person name="Li S."/>
            <person name="Ye J."/>
            <person name="Wang L."/>
            <person name="Fang L."/>
            <person name="Lei T."/>
            <person name="Chen C.-S."/>
            <person name="Chen H.-C."/>
            <person name="Xu Z."/>
            <person name="Li H."/>
            <person name="Huang H."/>
            <person name="Zhang F."/>
            <person name="Xu H."/>
            <person name="Li N."/>
            <person name="Zhao C."/>
            <person name="Li S."/>
            <person name="Dong L."/>
            <person name="Huang Y."/>
            <person name="Li L."/>
            <person name="Xi Y."/>
            <person name="Qi Q."/>
            <person name="Li W."/>
            <person name="Zhang B."/>
            <person name="Hu W."/>
            <person name="Zhang Y."/>
            <person name="Tian X."/>
            <person name="Jiao Y."/>
            <person name="Liang X."/>
            <person name="Jin J."/>
            <person name="Gao L."/>
            <person name="Zheng W."/>
            <person name="Hao B."/>
            <person name="Liu S.-M."/>
            <person name="Wang W."/>
            <person name="Yuan L."/>
            <person name="Cao M."/>
            <person name="McDermott J."/>
            <person name="Samudrala R."/>
            <person name="Wang J."/>
            <person name="Wong G.K.-S."/>
            <person name="Yang H."/>
        </authorList>
    </citation>
    <scope>NUCLEOTIDE SEQUENCE [LARGE SCALE GENOMIC DNA]</scope>
    <source>
        <strain>cv. Nipponbare</strain>
    </source>
</reference>
<proteinExistence type="inferred from homology"/>
<protein>
    <recommendedName>
        <fullName evidence="1">Ubiquitin-related modifier 1 homolog</fullName>
    </recommendedName>
</protein>
<name>URM1_ORYSJ</name>
<organism>
    <name type="scientific">Oryza sativa subsp. japonica</name>
    <name type="common">Rice</name>
    <dbReference type="NCBI Taxonomy" id="39947"/>
    <lineage>
        <taxon>Eukaryota</taxon>
        <taxon>Viridiplantae</taxon>
        <taxon>Streptophyta</taxon>
        <taxon>Embryophyta</taxon>
        <taxon>Tracheophyta</taxon>
        <taxon>Spermatophyta</taxon>
        <taxon>Magnoliopsida</taxon>
        <taxon>Liliopsida</taxon>
        <taxon>Poales</taxon>
        <taxon>Poaceae</taxon>
        <taxon>BOP clade</taxon>
        <taxon>Oryzoideae</taxon>
        <taxon>Oryzeae</taxon>
        <taxon>Oryzinae</taxon>
        <taxon>Oryza</taxon>
        <taxon>Oryza sativa</taxon>
    </lineage>
</organism>